<keyword id="KW-0687">Ribonucleoprotein</keyword>
<keyword id="KW-0689">Ribosomal protein</keyword>
<keyword id="KW-0694">RNA-binding</keyword>
<keyword id="KW-0699">rRNA-binding</keyword>
<comment type="function">
    <text evidence="1">One of the primary rRNA binding proteins, it binds directly to 16S rRNA where it nucleates assembly of the body of the 30S subunit.</text>
</comment>
<comment type="function">
    <text evidence="1">With S5 and S12 plays an important role in translational accuracy.</text>
</comment>
<comment type="subunit">
    <text evidence="1">Part of the 30S ribosomal subunit. Contacts protein S5. The interaction surface between S4 and S5 is involved in control of translational fidelity.</text>
</comment>
<comment type="similarity">
    <text evidence="1">Belongs to the universal ribosomal protein uS4 family.</text>
</comment>
<dbReference type="EMBL" id="CP000572">
    <property type="protein sequence ID" value="ABN91218.1"/>
    <property type="molecule type" value="Genomic_DNA"/>
</dbReference>
<dbReference type="RefSeq" id="WP_004535543.1">
    <property type="nucleotide sequence ID" value="NC_009076.1"/>
</dbReference>
<dbReference type="SMR" id="A3P088"/>
<dbReference type="KEGG" id="bpl:BURPS1106A_3779"/>
<dbReference type="HOGENOM" id="CLU_092403_0_2_4"/>
<dbReference type="Proteomes" id="UP000006738">
    <property type="component" value="Chromosome I"/>
</dbReference>
<dbReference type="GO" id="GO:0015935">
    <property type="term" value="C:small ribosomal subunit"/>
    <property type="evidence" value="ECO:0007669"/>
    <property type="project" value="InterPro"/>
</dbReference>
<dbReference type="GO" id="GO:0019843">
    <property type="term" value="F:rRNA binding"/>
    <property type="evidence" value="ECO:0007669"/>
    <property type="project" value="UniProtKB-UniRule"/>
</dbReference>
<dbReference type="GO" id="GO:0003735">
    <property type="term" value="F:structural constituent of ribosome"/>
    <property type="evidence" value="ECO:0007669"/>
    <property type="project" value="InterPro"/>
</dbReference>
<dbReference type="GO" id="GO:0042274">
    <property type="term" value="P:ribosomal small subunit biogenesis"/>
    <property type="evidence" value="ECO:0007669"/>
    <property type="project" value="TreeGrafter"/>
</dbReference>
<dbReference type="GO" id="GO:0006412">
    <property type="term" value="P:translation"/>
    <property type="evidence" value="ECO:0007669"/>
    <property type="project" value="UniProtKB-UniRule"/>
</dbReference>
<dbReference type="CDD" id="cd00165">
    <property type="entry name" value="S4"/>
    <property type="match status" value="1"/>
</dbReference>
<dbReference type="FunFam" id="1.10.1050.10:FF:000001">
    <property type="entry name" value="30S ribosomal protein S4"/>
    <property type="match status" value="1"/>
</dbReference>
<dbReference type="FunFam" id="3.10.290.10:FF:000001">
    <property type="entry name" value="30S ribosomal protein S4"/>
    <property type="match status" value="1"/>
</dbReference>
<dbReference type="Gene3D" id="1.10.1050.10">
    <property type="entry name" value="Ribosomal Protein S4 Delta 41, Chain A, domain 1"/>
    <property type="match status" value="1"/>
</dbReference>
<dbReference type="Gene3D" id="3.10.290.10">
    <property type="entry name" value="RNA-binding S4 domain"/>
    <property type="match status" value="1"/>
</dbReference>
<dbReference type="HAMAP" id="MF_01306_B">
    <property type="entry name" value="Ribosomal_uS4_B"/>
    <property type="match status" value="1"/>
</dbReference>
<dbReference type="InterPro" id="IPR022801">
    <property type="entry name" value="Ribosomal_uS4"/>
</dbReference>
<dbReference type="InterPro" id="IPR005709">
    <property type="entry name" value="Ribosomal_uS4_bac-type"/>
</dbReference>
<dbReference type="InterPro" id="IPR018079">
    <property type="entry name" value="Ribosomal_uS4_CS"/>
</dbReference>
<dbReference type="InterPro" id="IPR001912">
    <property type="entry name" value="Ribosomal_uS4_N"/>
</dbReference>
<dbReference type="InterPro" id="IPR002942">
    <property type="entry name" value="S4_RNA-bd"/>
</dbReference>
<dbReference type="InterPro" id="IPR036986">
    <property type="entry name" value="S4_RNA-bd_sf"/>
</dbReference>
<dbReference type="NCBIfam" id="NF003717">
    <property type="entry name" value="PRK05327.1"/>
    <property type="match status" value="1"/>
</dbReference>
<dbReference type="NCBIfam" id="TIGR01017">
    <property type="entry name" value="rpsD_bact"/>
    <property type="match status" value="1"/>
</dbReference>
<dbReference type="PANTHER" id="PTHR11831">
    <property type="entry name" value="30S 40S RIBOSOMAL PROTEIN"/>
    <property type="match status" value="1"/>
</dbReference>
<dbReference type="PANTHER" id="PTHR11831:SF4">
    <property type="entry name" value="SMALL RIBOSOMAL SUBUNIT PROTEIN US4M"/>
    <property type="match status" value="1"/>
</dbReference>
<dbReference type="Pfam" id="PF00163">
    <property type="entry name" value="Ribosomal_S4"/>
    <property type="match status" value="1"/>
</dbReference>
<dbReference type="Pfam" id="PF01479">
    <property type="entry name" value="S4"/>
    <property type="match status" value="1"/>
</dbReference>
<dbReference type="SMART" id="SM01390">
    <property type="entry name" value="Ribosomal_S4"/>
    <property type="match status" value="1"/>
</dbReference>
<dbReference type="SMART" id="SM00363">
    <property type="entry name" value="S4"/>
    <property type="match status" value="1"/>
</dbReference>
<dbReference type="SUPFAM" id="SSF55174">
    <property type="entry name" value="Alpha-L RNA-binding motif"/>
    <property type="match status" value="1"/>
</dbReference>
<dbReference type="PROSITE" id="PS00632">
    <property type="entry name" value="RIBOSOMAL_S4"/>
    <property type="match status" value="1"/>
</dbReference>
<dbReference type="PROSITE" id="PS50889">
    <property type="entry name" value="S4"/>
    <property type="match status" value="1"/>
</dbReference>
<organism>
    <name type="scientific">Burkholderia pseudomallei (strain 1106a)</name>
    <dbReference type="NCBI Taxonomy" id="357348"/>
    <lineage>
        <taxon>Bacteria</taxon>
        <taxon>Pseudomonadati</taxon>
        <taxon>Pseudomonadota</taxon>
        <taxon>Betaproteobacteria</taxon>
        <taxon>Burkholderiales</taxon>
        <taxon>Burkholderiaceae</taxon>
        <taxon>Burkholderia</taxon>
        <taxon>pseudomallei group</taxon>
    </lineage>
</organism>
<feature type="chain" id="PRO_0000322275" description="Small ribosomal subunit protein uS4">
    <location>
        <begin position="1"/>
        <end position="207"/>
    </location>
</feature>
<feature type="domain" description="S4 RNA-binding" evidence="1">
    <location>
        <begin position="97"/>
        <end position="160"/>
    </location>
</feature>
<gene>
    <name evidence="1" type="primary">rpsD</name>
    <name type="ordered locus">BURPS1106A_3779</name>
</gene>
<protein>
    <recommendedName>
        <fullName evidence="1">Small ribosomal subunit protein uS4</fullName>
    </recommendedName>
    <alternativeName>
        <fullName evidence="2">30S ribosomal protein S4</fullName>
    </alternativeName>
</protein>
<reference key="1">
    <citation type="journal article" date="2010" name="Genome Biol. Evol.">
        <title>Continuing evolution of Burkholderia mallei through genome reduction and large-scale rearrangements.</title>
        <authorList>
            <person name="Losada L."/>
            <person name="Ronning C.M."/>
            <person name="DeShazer D."/>
            <person name="Woods D."/>
            <person name="Fedorova N."/>
            <person name="Kim H.S."/>
            <person name="Shabalina S.A."/>
            <person name="Pearson T.R."/>
            <person name="Brinkac L."/>
            <person name="Tan P."/>
            <person name="Nandi T."/>
            <person name="Crabtree J."/>
            <person name="Badger J."/>
            <person name="Beckstrom-Sternberg S."/>
            <person name="Saqib M."/>
            <person name="Schutzer S.E."/>
            <person name="Keim P."/>
            <person name="Nierman W.C."/>
        </authorList>
    </citation>
    <scope>NUCLEOTIDE SEQUENCE [LARGE SCALE GENOMIC DNA]</scope>
    <source>
        <strain>1106a</strain>
    </source>
</reference>
<evidence type="ECO:0000255" key="1">
    <source>
        <dbReference type="HAMAP-Rule" id="MF_01306"/>
    </source>
</evidence>
<evidence type="ECO:0000305" key="2"/>
<accession>A3P088</accession>
<sequence>MARYIGPKAKLSRREGTDLFLKSARRSLADKCKLDSKPGQHGRISGARTSDYGTQLREKQKVKRIYGVLERQFRRYFAEADRRKGNTGETLLQLLESRLDNVVYRMGFGSTRAEARQLVSHKAVTVNGIVANIPSQQVKAGDVVAIREKAKKQARIVEALSLAEQGGMPSWVAVDAKKFEGTFKQVPERADIAGDINESLIVELYSR</sequence>
<name>RS4_BURP0</name>
<proteinExistence type="inferred from homology"/>